<protein>
    <recommendedName>
        <fullName>Spermatogenesis-associated protein 17</fullName>
    </recommendedName>
    <alternativeName>
        <fullName>Spermatogenesis-related protein 11</fullName>
    </alternativeName>
</protein>
<sequence>METNSNNFGELQELKDMATLAKLLARAPFLESQYYFRNRAVDSFRKFENDAAVMIQSWFRGCQVRAYMRHLNRVVTIIQKWWRSYLGRKFYQLVVEAAYYTMKMNLYNEMAVRIQRRWRGFRIRKYCFNYYYLKEYLRAVSETNDAIREALEEFAEMKEREERKVLLEREEKQKDYQARKMHYLLSTKQISGIYNSPFREHPDPWELRLQKAKPLGHQKYTAEKGKTSQSPSNWLACTSVHSFPQSESLPPISRKRCQGPFRDINEVLEQRYKPLEPTLRVAEPINHLRLAREAFKQEERMRNVQDKMFLPFSSYHKKEKYIPMIHSSSAYNSDSYGQKHFRSQDSKKWISDKDFQTVLPSFQLFSKYGKLYSKAGEIV</sequence>
<comment type="subcellular location">
    <subcellularLocation>
        <location evidence="2">Cytoplasm</location>
    </subcellularLocation>
</comment>
<comment type="alternative products">
    <event type="alternative splicing"/>
    <isoform>
        <id>Q9D552-1</id>
        <name>1</name>
        <sequence type="displayed"/>
    </isoform>
    <isoform>
        <id>Q9D552-2</id>
        <name>2</name>
        <sequence type="described" ref="VSP_021906 VSP_021907"/>
    </isoform>
    <isoform>
        <id>Q9D552-3</id>
        <name>3</name>
        <sequence type="described" ref="VSP_021908 VSP_021909"/>
    </isoform>
</comment>
<comment type="tissue specificity">
    <text evidence="2">Strongly expressed in adult testis but weakly expressed in the spleen and thymus. Strongly expressed in round and elongating spermatids, and weakly or not expressed in spermatozoa.</text>
</comment>
<comment type="caution">
    <text evidence="6">It is uncertain whether Met-1 or Met-17 is the initiator.</text>
</comment>
<feature type="chain" id="PRO_0000265935" description="Spermatogenesis-associated protein 17">
    <location>
        <begin position="1"/>
        <end position="379"/>
    </location>
</feature>
<feature type="domain" description="IQ 1" evidence="1">
    <location>
        <begin position="48"/>
        <end position="77"/>
    </location>
</feature>
<feature type="domain" description="IQ 2" evidence="1">
    <location>
        <begin position="71"/>
        <end position="100"/>
    </location>
</feature>
<feature type="domain" description="IQ 3" evidence="1">
    <location>
        <begin position="107"/>
        <end position="136"/>
    </location>
</feature>
<feature type="splice variant" id="VSP_021908" description="In isoform 3." evidence="5">
    <original>AAYYTMKMNLYNEMAVRIQRRWRGFRIRKYCFNYYYLKEYLRAVSETNDAIRE</original>
    <variation>PPSPETAVDDNHAYGLLMQFLQIKEMTLELGFGENCE</variation>
    <location>
        <begin position="97"/>
        <end position="149"/>
    </location>
</feature>
<feature type="splice variant" id="VSP_021909" description="In isoform 3." evidence="5">
    <location>
        <begin position="150"/>
        <end position="379"/>
    </location>
</feature>
<feature type="splice variant" id="VSP_021906" description="In isoform 2." evidence="3 4">
    <original>ISG</original>
    <variation>HKH</variation>
    <location>
        <begin position="190"/>
        <end position="192"/>
    </location>
</feature>
<feature type="splice variant" id="VSP_021907" description="In isoform 2." evidence="3 4">
    <location>
        <begin position="193"/>
        <end position="379"/>
    </location>
</feature>
<name>SPT17_MOUSE</name>
<dbReference type="EMBL" id="AK015780">
    <property type="protein sequence ID" value="BAB29973.1"/>
    <property type="molecule type" value="mRNA"/>
</dbReference>
<dbReference type="EMBL" id="AK050925">
    <property type="protein sequence ID" value="BAC34462.1"/>
    <property type="molecule type" value="mRNA"/>
</dbReference>
<dbReference type="EMBL" id="BC089520">
    <property type="protein sequence ID" value="AAH89520.1"/>
    <property type="molecule type" value="mRNA"/>
</dbReference>
<dbReference type="EMBL" id="AY747687">
    <property type="protein sequence ID" value="AAW33969.1"/>
    <property type="molecule type" value="mRNA"/>
</dbReference>
<dbReference type="CCDS" id="CCDS15604.1">
    <molecule id="Q9D552-1"/>
</dbReference>
<dbReference type="CCDS" id="CCDS48479.1">
    <molecule id="Q9D552-2"/>
</dbReference>
<dbReference type="RefSeq" id="NP_083124.1">
    <molecule id="Q9D552-1"/>
    <property type="nucleotide sequence ID" value="NM_028848.3"/>
</dbReference>
<dbReference type="RefSeq" id="NP_083343.1">
    <molecule id="Q9D552-2"/>
    <property type="nucleotide sequence ID" value="NM_029067.1"/>
</dbReference>
<dbReference type="RefSeq" id="XP_006497270.1">
    <molecule id="Q9D552-1"/>
    <property type="nucleotide sequence ID" value="XM_006497207.4"/>
</dbReference>
<dbReference type="RefSeq" id="XP_036009920.1">
    <molecule id="Q9D552-1"/>
    <property type="nucleotide sequence ID" value="XM_036154027.1"/>
</dbReference>
<dbReference type="RefSeq" id="XP_036009925.1">
    <molecule id="Q9D552-1"/>
    <property type="nucleotide sequence ID" value="XM_036154032.1"/>
</dbReference>
<dbReference type="SMR" id="Q9D552"/>
<dbReference type="FunCoup" id="Q9D552">
    <property type="interactions" value="6"/>
</dbReference>
<dbReference type="STRING" id="10090.ENSMUSP00000138855"/>
<dbReference type="iPTMnet" id="Q9D552"/>
<dbReference type="PhosphoSitePlus" id="Q9D552"/>
<dbReference type="PaxDb" id="10090-ENSMUSP00000106570"/>
<dbReference type="ProteomicsDB" id="257382">
    <molecule id="Q9D552-1"/>
</dbReference>
<dbReference type="ProteomicsDB" id="257383">
    <molecule id="Q9D552-2"/>
</dbReference>
<dbReference type="ProteomicsDB" id="257384">
    <molecule id="Q9D552-3"/>
</dbReference>
<dbReference type="Antibodypedia" id="34622">
    <property type="antibodies" value="54 antibodies from 19 providers"/>
</dbReference>
<dbReference type="Ensembl" id="ENSMUST00000027908.13">
    <molecule id="Q9D552-1"/>
    <property type="protein sequence ID" value="ENSMUSP00000027908.7"/>
    <property type="gene ID" value="ENSMUSG00000026611.18"/>
</dbReference>
<dbReference type="Ensembl" id="ENSMUST00000110945.4">
    <molecule id="Q9D552-2"/>
    <property type="protein sequence ID" value="ENSMUSP00000106570.2"/>
    <property type="gene ID" value="ENSMUSG00000026611.18"/>
</dbReference>
<dbReference type="Ensembl" id="ENSMUST00000183819.8">
    <molecule id="Q9D552-1"/>
    <property type="protein sequence ID" value="ENSMUSP00000138855.2"/>
    <property type="gene ID" value="ENSMUSG00000026611.18"/>
</dbReference>
<dbReference type="GeneID" id="74717"/>
<dbReference type="KEGG" id="mmu:74717"/>
<dbReference type="UCSC" id="uc007dzt.2">
    <molecule id="Q9D552-1"/>
    <property type="organism name" value="mouse"/>
</dbReference>
<dbReference type="UCSC" id="uc007dzw.2">
    <molecule id="Q9D552-2"/>
    <property type="organism name" value="mouse"/>
</dbReference>
<dbReference type="AGR" id="MGI:1921967"/>
<dbReference type="CTD" id="128153"/>
<dbReference type="MGI" id="MGI:1921967">
    <property type="gene designation" value="Spata17"/>
</dbReference>
<dbReference type="VEuPathDB" id="HostDB:ENSMUSG00000026611"/>
<dbReference type="eggNOG" id="ENOG502QS0S">
    <property type="taxonomic scope" value="Eukaryota"/>
</dbReference>
<dbReference type="GeneTree" id="ENSGT00390000011270"/>
<dbReference type="HOGENOM" id="CLU_044264_0_0_1"/>
<dbReference type="InParanoid" id="Q9D552"/>
<dbReference type="OMA" id="LHTTSKY"/>
<dbReference type="OrthoDB" id="190375at2759"/>
<dbReference type="PhylomeDB" id="Q9D552"/>
<dbReference type="TreeFam" id="TF329213"/>
<dbReference type="BioGRID-ORCS" id="74717">
    <property type="hits" value="0 hits in 78 CRISPR screens"/>
</dbReference>
<dbReference type="PRO" id="PR:Q9D552"/>
<dbReference type="Proteomes" id="UP000000589">
    <property type="component" value="Chromosome 1"/>
</dbReference>
<dbReference type="RNAct" id="Q9D552">
    <property type="molecule type" value="protein"/>
</dbReference>
<dbReference type="Bgee" id="ENSMUSG00000026611">
    <property type="expression patterns" value="Expressed in spermatid and 62 other cell types or tissues"/>
</dbReference>
<dbReference type="ExpressionAtlas" id="Q9D552">
    <property type="expression patterns" value="baseline and differential"/>
</dbReference>
<dbReference type="GO" id="GO:0005737">
    <property type="term" value="C:cytoplasm"/>
    <property type="evidence" value="ECO:0007669"/>
    <property type="project" value="UniProtKB-SubCell"/>
</dbReference>
<dbReference type="GO" id="GO:0005516">
    <property type="term" value="F:calmodulin binding"/>
    <property type="evidence" value="ECO:0007669"/>
    <property type="project" value="UniProtKB-KW"/>
</dbReference>
<dbReference type="CDD" id="cd23767">
    <property type="entry name" value="IQCD"/>
    <property type="match status" value="1"/>
</dbReference>
<dbReference type="Gene3D" id="1.20.5.190">
    <property type="match status" value="1"/>
</dbReference>
<dbReference type="InterPro" id="IPR051185">
    <property type="entry name" value="ASPM"/>
</dbReference>
<dbReference type="InterPro" id="IPR000048">
    <property type="entry name" value="IQ_motif_EF-hand-BS"/>
</dbReference>
<dbReference type="InterPro" id="IPR027417">
    <property type="entry name" value="P-loop_NTPase"/>
</dbReference>
<dbReference type="PANTHER" id="PTHR22706">
    <property type="entry name" value="ASSEMBLY FACTOR FOR SPINDLE MICROTUBULES"/>
    <property type="match status" value="1"/>
</dbReference>
<dbReference type="PANTHER" id="PTHR22706:SF1">
    <property type="entry name" value="ASSEMBLY FACTOR FOR SPINDLE MICROTUBULES"/>
    <property type="match status" value="1"/>
</dbReference>
<dbReference type="Pfam" id="PF00612">
    <property type="entry name" value="IQ"/>
    <property type="match status" value="3"/>
</dbReference>
<dbReference type="SMART" id="SM00015">
    <property type="entry name" value="IQ"/>
    <property type="match status" value="3"/>
</dbReference>
<dbReference type="SUPFAM" id="SSF52540">
    <property type="entry name" value="P-loop containing nucleoside triphosphate hydrolases"/>
    <property type="match status" value="1"/>
</dbReference>
<dbReference type="PROSITE" id="PS50096">
    <property type="entry name" value="IQ"/>
    <property type="match status" value="3"/>
</dbReference>
<keyword id="KW-0025">Alternative splicing</keyword>
<keyword id="KW-0112">Calmodulin-binding</keyword>
<keyword id="KW-0963">Cytoplasm</keyword>
<keyword id="KW-1185">Reference proteome</keyword>
<keyword id="KW-0677">Repeat</keyword>
<organism>
    <name type="scientific">Mus musculus</name>
    <name type="common">Mouse</name>
    <dbReference type="NCBI Taxonomy" id="10090"/>
    <lineage>
        <taxon>Eukaryota</taxon>
        <taxon>Metazoa</taxon>
        <taxon>Chordata</taxon>
        <taxon>Craniata</taxon>
        <taxon>Vertebrata</taxon>
        <taxon>Euteleostomi</taxon>
        <taxon>Mammalia</taxon>
        <taxon>Eutheria</taxon>
        <taxon>Euarchontoglires</taxon>
        <taxon>Glires</taxon>
        <taxon>Rodentia</taxon>
        <taxon>Myomorpha</taxon>
        <taxon>Muroidea</taxon>
        <taxon>Muridae</taxon>
        <taxon>Murinae</taxon>
        <taxon>Mus</taxon>
        <taxon>Mus</taxon>
    </lineage>
</organism>
<reference key="1">
    <citation type="journal article" date="2005" name="Science">
        <title>The transcriptional landscape of the mammalian genome.</title>
        <authorList>
            <person name="Carninci P."/>
            <person name="Kasukawa T."/>
            <person name="Katayama S."/>
            <person name="Gough J."/>
            <person name="Frith M.C."/>
            <person name="Maeda N."/>
            <person name="Oyama R."/>
            <person name="Ravasi T."/>
            <person name="Lenhard B."/>
            <person name="Wells C."/>
            <person name="Kodzius R."/>
            <person name="Shimokawa K."/>
            <person name="Bajic V.B."/>
            <person name="Brenner S.E."/>
            <person name="Batalov S."/>
            <person name="Forrest A.R."/>
            <person name="Zavolan M."/>
            <person name="Davis M.J."/>
            <person name="Wilming L.G."/>
            <person name="Aidinis V."/>
            <person name="Allen J.E."/>
            <person name="Ambesi-Impiombato A."/>
            <person name="Apweiler R."/>
            <person name="Aturaliya R.N."/>
            <person name="Bailey T.L."/>
            <person name="Bansal M."/>
            <person name="Baxter L."/>
            <person name="Beisel K.W."/>
            <person name="Bersano T."/>
            <person name="Bono H."/>
            <person name="Chalk A.M."/>
            <person name="Chiu K.P."/>
            <person name="Choudhary V."/>
            <person name="Christoffels A."/>
            <person name="Clutterbuck D.R."/>
            <person name="Crowe M.L."/>
            <person name="Dalla E."/>
            <person name="Dalrymple B.P."/>
            <person name="de Bono B."/>
            <person name="Della Gatta G."/>
            <person name="di Bernardo D."/>
            <person name="Down T."/>
            <person name="Engstrom P."/>
            <person name="Fagiolini M."/>
            <person name="Faulkner G."/>
            <person name="Fletcher C.F."/>
            <person name="Fukushima T."/>
            <person name="Furuno M."/>
            <person name="Futaki S."/>
            <person name="Gariboldi M."/>
            <person name="Georgii-Hemming P."/>
            <person name="Gingeras T.R."/>
            <person name="Gojobori T."/>
            <person name="Green R.E."/>
            <person name="Gustincich S."/>
            <person name="Harbers M."/>
            <person name="Hayashi Y."/>
            <person name="Hensch T.K."/>
            <person name="Hirokawa N."/>
            <person name="Hill D."/>
            <person name="Huminiecki L."/>
            <person name="Iacono M."/>
            <person name="Ikeo K."/>
            <person name="Iwama A."/>
            <person name="Ishikawa T."/>
            <person name="Jakt M."/>
            <person name="Kanapin A."/>
            <person name="Katoh M."/>
            <person name="Kawasawa Y."/>
            <person name="Kelso J."/>
            <person name="Kitamura H."/>
            <person name="Kitano H."/>
            <person name="Kollias G."/>
            <person name="Krishnan S.P."/>
            <person name="Kruger A."/>
            <person name="Kummerfeld S.K."/>
            <person name="Kurochkin I.V."/>
            <person name="Lareau L.F."/>
            <person name="Lazarevic D."/>
            <person name="Lipovich L."/>
            <person name="Liu J."/>
            <person name="Liuni S."/>
            <person name="McWilliam S."/>
            <person name="Madan Babu M."/>
            <person name="Madera M."/>
            <person name="Marchionni L."/>
            <person name="Matsuda H."/>
            <person name="Matsuzawa S."/>
            <person name="Miki H."/>
            <person name="Mignone F."/>
            <person name="Miyake S."/>
            <person name="Morris K."/>
            <person name="Mottagui-Tabar S."/>
            <person name="Mulder N."/>
            <person name="Nakano N."/>
            <person name="Nakauchi H."/>
            <person name="Ng P."/>
            <person name="Nilsson R."/>
            <person name="Nishiguchi S."/>
            <person name="Nishikawa S."/>
            <person name="Nori F."/>
            <person name="Ohara O."/>
            <person name="Okazaki Y."/>
            <person name="Orlando V."/>
            <person name="Pang K.C."/>
            <person name="Pavan W.J."/>
            <person name="Pavesi G."/>
            <person name="Pesole G."/>
            <person name="Petrovsky N."/>
            <person name="Piazza S."/>
            <person name="Reed J."/>
            <person name="Reid J.F."/>
            <person name="Ring B.Z."/>
            <person name="Ringwald M."/>
            <person name="Rost B."/>
            <person name="Ruan Y."/>
            <person name="Salzberg S.L."/>
            <person name="Sandelin A."/>
            <person name="Schneider C."/>
            <person name="Schoenbach C."/>
            <person name="Sekiguchi K."/>
            <person name="Semple C.A."/>
            <person name="Seno S."/>
            <person name="Sessa L."/>
            <person name="Sheng Y."/>
            <person name="Shibata Y."/>
            <person name="Shimada H."/>
            <person name="Shimada K."/>
            <person name="Silva D."/>
            <person name="Sinclair B."/>
            <person name="Sperling S."/>
            <person name="Stupka E."/>
            <person name="Sugiura K."/>
            <person name="Sultana R."/>
            <person name="Takenaka Y."/>
            <person name="Taki K."/>
            <person name="Tammoja K."/>
            <person name="Tan S.L."/>
            <person name="Tang S."/>
            <person name="Taylor M.S."/>
            <person name="Tegner J."/>
            <person name="Teichmann S.A."/>
            <person name="Ueda H.R."/>
            <person name="van Nimwegen E."/>
            <person name="Verardo R."/>
            <person name="Wei C.L."/>
            <person name="Yagi K."/>
            <person name="Yamanishi H."/>
            <person name="Zabarovsky E."/>
            <person name="Zhu S."/>
            <person name="Zimmer A."/>
            <person name="Hide W."/>
            <person name="Bult C."/>
            <person name="Grimmond S.M."/>
            <person name="Teasdale R.D."/>
            <person name="Liu E.T."/>
            <person name="Brusic V."/>
            <person name="Quackenbush J."/>
            <person name="Wahlestedt C."/>
            <person name="Mattick J.S."/>
            <person name="Hume D.A."/>
            <person name="Kai C."/>
            <person name="Sasaki D."/>
            <person name="Tomaru Y."/>
            <person name="Fukuda S."/>
            <person name="Kanamori-Katayama M."/>
            <person name="Suzuki M."/>
            <person name="Aoki J."/>
            <person name="Arakawa T."/>
            <person name="Iida J."/>
            <person name="Imamura K."/>
            <person name="Itoh M."/>
            <person name="Kato T."/>
            <person name="Kawaji H."/>
            <person name="Kawagashira N."/>
            <person name="Kawashima T."/>
            <person name="Kojima M."/>
            <person name="Kondo S."/>
            <person name="Konno H."/>
            <person name="Nakano K."/>
            <person name="Ninomiya N."/>
            <person name="Nishio T."/>
            <person name="Okada M."/>
            <person name="Plessy C."/>
            <person name="Shibata K."/>
            <person name="Shiraki T."/>
            <person name="Suzuki S."/>
            <person name="Tagami M."/>
            <person name="Waki K."/>
            <person name="Watahiki A."/>
            <person name="Okamura-Oho Y."/>
            <person name="Suzuki H."/>
            <person name="Kawai J."/>
            <person name="Hayashizaki Y."/>
        </authorList>
    </citation>
    <scope>NUCLEOTIDE SEQUENCE [LARGE SCALE MRNA] (ISOFORMS 1 AND 3)</scope>
    <source>
        <strain>C57BL/6J</strain>
        <tissue>Testis</tissue>
    </source>
</reference>
<reference key="2">
    <citation type="journal article" date="2004" name="Genome Res.">
        <title>The status, quality, and expansion of the NIH full-length cDNA project: the Mammalian Gene Collection (MGC).</title>
        <authorList>
            <consortium name="The MGC Project Team"/>
        </authorList>
    </citation>
    <scope>NUCLEOTIDE SEQUENCE [LARGE SCALE MRNA] (ISOFORM 2)</scope>
    <source>
        <tissue>Testis</tissue>
    </source>
</reference>
<reference key="3">
    <citation type="journal article" date="2005" name="Acta Biochim. Biophys. Sin.">
        <title>Molecular cloning of MSRG-11 gene related to apoptosis of mouse spermatogenic cells.</title>
        <authorList>
            <person name="Deng Y."/>
            <person name="Nie D.S."/>
            <person name="Wang J."/>
            <person name="Tan X.J."/>
            <person name="Nie Z.Y."/>
            <person name="Yang H.M."/>
            <person name="Hu L.S."/>
            <person name="Lu G.X."/>
        </authorList>
    </citation>
    <scope>NUCLEOTIDE SEQUENCE [MRNA] (ISOFORM 2)</scope>
    <scope>SUBCELLULAR LOCATION</scope>
    <scope>TISSUE SPECIFICITY</scope>
</reference>
<accession>Q9D552</accession>
<accession>Q5FWA7</accession>
<accession>Q8BQE6</accession>
<gene>
    <name type="primary">Spata17</name>
    <name type="synonym">Srg11</name>
</gene>
<evidence type="ECO:0000255" key="1">
    <source>
        <dbReference type="PROSITE-ProRule" id="PRU00116"/>
    </source>
</evidence>
<evidence type="ECO:0000269" key="2">
    <source>
    </source>
</evidence>
<evidence type="ECO:0000303" key="3">
    <source>
    </source>
</evidence>
<evidence type="ECO:0000303" key="4">
    <source>
    </source>
</evidence>
<evidence type="ECO:0000303" key="5">
    <source>
    </source>
</evidence>
<evidence type="ECO:0000305" key="6"/>
<proteinExistence type="evidence at transcript level"/>